<protein>
    <recommendedName>
        <fullName evidence="12">Inositol polyphosphate 5-phosphatase K</fullName>
        <ecNumber evidence="3 8 9">3.1.3.56</ecNumber>
    </recommendedName>
    <alternativeName>
        <fullName>Phosphatidylinositol-3,4,5-trisphosphate 5-phosphatase</fullName>
        <ecNumber evidence="3 5">3.1.3.86</ecNumber>
    </alternativeName>
    <alternativeName>
        <fullName>Phosphatidylinositol-4,5-bisphosphate 5-phosphatase</fullName>
        <ecNumber evidence="3">3.1.3.36</ecNumber>
    </alternativeName>
    <alternativeName>
        <fullName evidence="10">Skeletal muscle and kidney-enriched inositol phosphatase</fullName>
    </alternativeName>
</protein>
<gene>
    <name evidence="19" type="primary">INPP5K</name>
    <name type="synonym">PPS</name>
    <name evidence="10" type="synonym">SKIP</name>
</gene>
<evidence type="ECO:0000250" key="1">
    <source>
        <dbReference type="UniProtKB" id="Q8C5L6"/>
    </source>
</evidence>
<evidence type="ECO:0000255" key="2"/>
<evidence type="ECO:0000269" key="3">
    <source>
    </source>
</evidence>
<evidence type="ECO:0000269" key="4">
    <source>
    </source>
</evidence>
<evidence type="ECO:0000269" key="5">
    <source>
    </source>
</evidence>
<evidence type="ECO:0000269" key="6">
    <source>
    </source>
</evidence>
<evidence type="ECO:0000269" key="7">
    <source>
    </source>
</evidence>
<evidence type="ECO:0000269" key="8">
    <source>
    </source>
</evidence>
<evidence type="ECO:0000269" key="9">
    <source>
    </source>
</evidence>
<evidence type="ECO:0000303" key="10">
    <source>
    </source>
</evidence>
<evidence type="ECO:0000303" key="11">
    <source>
    </source>
</evidence>
<evidence type="ECO:0000305" key="12"/>
<evidence type="ECO:0000305" key="13">
    <source>
    </source>
</evidence>
<evidence type="ECO:0000305" key="14">
    <source>
    </source>
</evidence>
<evidence type="ECO:0000305" key="15">
    <source>
    </source>
</evidence>
<evidence type="ECO:0000305" key="16">
    <source>
    </source>
</evidence>
<evidence type="ECO:0000312" key="17">
    <source>
        <dbReference type="EMBL" id="AAB03214.1"/>
    </source>
</evidence>
<evidence type="ECO:0000312" key="18">
    <source>
        <dbReference type="EMBL" id="AAH04362.1"/>
    </source>
</evidence>
<evidence type="ECO:0000312" key="19">
    <source>
        <dbReference type="HGNC" id="HGNC:33882"/>
    </source>
</evidence>
<name>INP5K_HUMAN</name>
<accession>Q9BT40</accession>
<accession>B2R6I2</accession>
<accession>B2R750</accession>
<accession>D3DTH8</accession>
<accession>Q15733</accession>
<accession>Q9NPJ5</accession>
<accession>Q9P2R5</accession>
<sequence>MSSRKLSGPKGRRLSIHVVTWNVASAAPPLDLSDLLQLNNRNLNLDIYVIGLQELNSGIISLLSDAAFNDSWSSFLMDVLSPLSFIKVSHVRMQGILLLVFAKYQHLPYIQILSTKSTPTGLFGYWGNKGGVNICLKLYGYYVSIINCHLPPHISNNYQRLEHFDRILEMQNCEGRDIPNILDHDLIIWFGDMNFRIEDFGLHFVRESIKNRCYGGLWEKDQLSIAKKHDPLLREFQEGRLLFPPTYKFDRNSNDYDTSEKKRKPAWTDRILWRLKRQPCAGPDTPIPPASHFSLSLRGYSSHMTYGISDHKPVSGTFDLELKPLVSAPLIVLMPEDLWTVENDMMVSYSSTSDFPSSPWDWIGLYKVGLRDVNDYVSYAWVGDSKVSCSDNLNQVYIDISNIPTTEDEFLLCYYSNSLRSVVGISRPFQIPPGSLREDPLGEAQPQI</sequence>
<reference evidence="12" key="1">
    <citation type="journal article" date="2000" name="J. Biol. Chem.">
        <title>Identification and characterization of a novel inositol polyphosphate 5-phosphatase.</title>
        <authorList>
            <person name="Ijuin T."/>
            <person name="Mochizuki Y."/>
            <person name="Fukami K."/>
            <person name="Funaki M."/>
            <person name="Asano T."/>
            <person name="Takenawa T."/>
        </authorList>
    </citation>
    <scope>NUCLEOTIDE SEQUENCE [GENOMIC DNA / MRNA] (ISOFORMS 1 AND 2)</scope>
    <scope>FUNCTION</scope>
    <scope>CATALYTIC ACTIVITY</scope>
    <scope>TISSUE SPECIFICITY</scope>
    <scope>BIOPHYSICOCHEMICAL PROPERTIES</scope>
    <scope>SUBCELLULAR LOCATION</scope>
    <source>
        <tissue evidence="3">Testis</tissue>
    </source>
</reference>
<reference key="2">
    <citation type="journal article" date="2004" name="Nat. Genet.">
        <title>Complete sequencing and characterization of 21,243 full-length human cDNAs.</title>
        <authorList>
            <person name="Ota T."/>
            <person name="Suzuki Y."/>
            <person name="Nishikawa T."/>
            <person name="Otsuki T."/>
            <person name="Sugiyama T."/>
            <person name="Irie R."/>
            <person name="Wakamatsu A."/>
            <person name="Hayashi K."/>
            <person name="Sato H."/>
            <person name="Nagai K."/>
            <person name="Kimura K."/>
            <person name="Makita H."/>
            <person name="Sekine M."/>
            <person name="Obayashi M."/>
            <person name="Nishi T."/>
            <person name="Shibahara T."/>
            <person name="Tanaka T."/>
            <person name="Ishii S."/>
            <person name="Yamamoto J."/>
            <person name="Saito K."/>
            <person name="Kawai Y."/>
            <person name="Isono Y."/>
            <person name="Nakamura Y."/>
            <person name="Nagahari K."/>
            <person name="Murakami K."/>
            <person name="Yasuda T."/>
            <person name="Iwayanagi T."/>
            <person name="Wagatsuma M."/>
            <person name="Shiratori A."/>
            <person name="Sudo H."/>
            <person name="Hosoiri T."/>
            <person name="Kaku Y."/>
            <person name="Kodaira H."/>
            <person name="Kondo H."/>
            <person name="Sugawara M."/>
            <person name="Takahashi M."/>
            <person name="Kanda K."/>
            <person name="Yokoi T."/>
            <person name="Furuya T."/>
            <person name="Kikkawa E."/>
            <person name="Omura Y."/>
            <person name="Abe K."/>
            <person name="Kamihara K."/>
            <person name="Katsuta N."/>
            <person name="Sato K."/>
            <person name="Tanikawa M."/>
            <person name="Yamazaki M."/>
            <person name="Ninomiya K."/>
            <person name="Ishibashi T."/>
            <person name="Yamashita H."/>
            <person name="Murakawa K."/>
            <person name="Fujimori K."/>
            <person name="Tanai H."/>
            <person name="Kimata M."/>
            <person name="Watanabe M."/>
            <person name="Hiraoka S."/>
            <person name="Chiba Y."/>
            <person name="Ishida S."/>
            <person name="Ono Y."/>
            <person name="Takiguchi S."/>
            <person name="Watanabe S."/>
            <person name="Yosida M."/>
            <person name="Hotuta T."/>
            <person name="Kusano J."/>
            <person name="Kanehori K."/>
            <person name="Takahashi-Fujii A."/>
            <person name="Hara H."/>
            <person name="Tanase T.-O."/>
            <person name="Nomura Y."/>
            <person name="Togiya S."/>
            <person name="Komai F."/>
            <person name="Hara R."/>
            <person name="Takeuchi K."/>
            <person name="Arita M."/>
            <person name="Imose N."/>
            <person name="Musashino K."/>
            <person name="Yuuki H."/>
            <person name="Oshima A."/>
            <person name="Sasaki N."/>
            <person name="Aotsuka S."/>
            <person name="Yoshikawa Y."/>
            <person name="Matsunawa H."/>
            <person name="Ichihara T."/>
            <person name="Shiohata N."/>
            <person name="Sano S."/>
            <person name="Moriya S."/>
            <person name="Momiyama H."/>
            <person name="Satoh N."/>
            <person name="Takami S."/>
            <person name="Terashima Y."/>
            <person name="Suzuki O."/>
            <person name="Nakagawa S."/>
            <person name="Senoh A."/>
            <person name="Mizoguchi H."/>
            <person name="Goto Y."/>
            <person name="Shimizu F."/>
            <person name="Wakebe H."/>
            <person name="Hishigaki H."/>
            <person name="Watanabe T."/>
            <person name="Sugiyama A."/>
            <person name="Takemoto M."/>
            <person name="Kawakami B."/>
            <person name="Yamazaki M."/>
            <person name="Watanabe K."/>
            <person name="Kumagai A."/>
            <person name="Itakura S."/>
            <person name="Fukuzumi Y."/>
            <person name="Fujimori Y."/>
            <person name="Komiyama M."/>
            <person name="Tashiro H."/>
            <person name="Tanigami A."/>
            <person name="Fujiwara T."/>
            <person name="Ono T."/>
            <person name="Yamada K."/>
            <person name="Fujii Y."/>
            <person name="Ozaki K."/>
            <person name="Hirao M."/>
            <person name="Ohmori Y."/>
            <person name="Kawabata A."/>
            <person name="Hikiji T."/>
            <person name="Kobatake N."/>
            <person name="Inagaki H."/>
            <person name="Ikema Y."/>
            <person name="Okamoto S."/>
            <person name="Okitani R."/>
            <person name="Kawakami T."/>
            <person name="Noguchi S."/>
            <person name="Itoh T."/>
            <person name="Shigeta K."/>
            <person name="Senba T."/>
            <person name="Matsumura K."/>
            <person name="Nakajima Y."/>
            <person name="Mizuno T."/>
            <person name="Morinaga M."/>
            <person name="Sasaki M."/>
            <person name="Togashi T."/>
            <person name="Oyama M."/>
            <person name="Hata H."/>
            <person name="Watanabe M."/>
            <person name="Komatsu T."/>
            <person name="Mizushima-Sugano J."/>
            <person name="Satoh T."/>
            <person name="Shirai Y."/>
            <person name="Takahashi Y."/>
            <person name="Nakagawa K."/>
            <person name="Okumura K."/>
            <person name="Nagase T."/>
            <person name="Nomura N."/>
            <person name="Kikuchi H."/>
            <person name="Masuho Y."/>
            <person name="Yamashita R."/>
            <person name="Nakai K."/>
            <person name="Yada T."/>
            <person name="Nakamura Y."/>
            <person name="Ohara O."/>
            <person name="Isogai T."/>
            <person name="Sugano S."/>
        </authorList>
    </citation>
    <scope>NUCLEOTIDE SEQUENCE [LARGE SCALE MRNA] (ISOFORMS 1 AND 2)</scope>
    <source>
        <tissue>Brain</tissue>
        <tissue>Thymus</tissue>
    </source>
</reference>
<reference evidence="12" key="3">
    <citation type="submission" date="2005-09" db="EMBL/GenBank/DDBJ databases">
        <authorList>
            <person name="Mural R.J."/>
            <person name="Istrail S."/>
            <person name="Sutton G.G."/>
            <person name="Florea L."/>
            <person name="Halpern A.L."/>
            <person name="Mobarry C.M."/>
            <person name="Lippert R."/>
            <person name="Walenz B."/>
            <person name="Shatkay H."/>
            <person name="Dew I."/>
            <person name="Miller J.R."/>
            <person name="Flanigan M.J."/>
            <person name="Edwards N.J."/>
            <person name="Bolanos R."/>
            <person name="Fasulo D."/>
            <person name="Halldorsson B.V."/>
            <person name="Hannenhalli S."/>
            <person name="Turner R."/>
            <person name="Yooseph S."/>
            <person name="Lu F."/>
            <person name="Nusskern D.R."/>
            <person name="Shue B.C."/>
            <person name="Zheng X.H."/>
            <person name="Zhong F."/>
            <person name="Delcher A.L."/>
            <person name="Huson D.H."/>
            <person name="Kravitz S.A."/>
            <person name="Mouchard L."/>
            <person name="Reinert K."/>
            <person name="Remington K.A."/>
            <person name="Clark A.G."/>
            <person name="Waterman M.S."/>
            <person name="Eichler E.E."/>
            <person name="Adams M.D."/>
            <person name="Hunkapiller M.W."/>
            <person name="Myers E.W."/>
            <person name="Venter J.C."/>
        </authorList>
    </citation>
    <scope>NUCLEOTIDE SEQUENCE [LARGE SCALE GENOMIC DNA]</scope>
</reference>
<reference evidence="12" key="4">
    <citation type="journal article" date="2004" name="Genome Res.">
        <title>The status, quality, and expansion of the NIH full-length cDNA project: the Mammalian Gene Collection (MGC).</title>
        <authorList>
            <consortium name="The MGC Project Team"/>
        </authorList>
    </citation>
    <scope>NUCLEOTIDE SEQUENCE [LARGE SCALE MRNA] (ISOFORM 1)</scope>
    <source>
        <tissue evidence="18">Eye</tissue>
    </source>
</reference>
<reference evidence="12" key="5">
    <citation type="submission" date="1996-01" db="EMBL/GenBank/DDBJ databases">
        <authorList>
            <person name="Nussbaum R.L."/>
        </authorList>
    </citation>
    <scope>NUCLEOTIDE SEQUENCE [MRNA] OF 120-448</scope>
    <source>
        <tissue evidence="17">Brain</tissue>
    </source>
</reference>
<reference evidence="12" key="6">
    <citation type="journal article" date="2003" name="J. Biol. Chem.">
        <title>Identification of a novel domain in two mammalian inositol-polyphosphate 5-phosphatases that mediates membrane ruffle localization. The inositol 5-phosphatase SKIP localizes to the endoplasmic reticulum and translocates to membrane ruffles following epidermal growth factor stimulation.</title>
        <authorList>
            <person name="Gurung R."/>
            <person name="Tan A."/>
            <person name="Ooms L.M."/>
            <person name="McGrath M.J."/>
            <person name="Huysmans R.D."/>
            <person name="Munday A.D."/>
            <person name="Prescott M."/>
            <person name="Whisstock J.C."/>
            <person name="Mitchell C.A."/>
        </authorList>
    </citation>
    <scope>SUBCELLULAR LOCATION</scope>
    <scope>MUTAGENESIS OF TYR-349; ASP-361; TRP-362 AND TYR-376</scope>
</reference>
<reference key="7">
    <citation type="journal article" date="2006" name="Cell. Signal.">
        <title>The influence of anionic lipids on SHIP2 phosphatidylinositol 3,4,5-trisphosphate 5-phosphatase activity.</title>
        <authorList>
            <person name="Vandeput F."/>
            <person name="Backers K."/>
            <person name="Villeret V."/>
            <person name="Pesesse X."/>
            <person name="Erneux C."/>
        </authorList>
    </citation>
    <scope>CATALYTIC ACTIVITY</scope>
    <scope>FUNCTION</scope>
</reference>
<reference key="8">
    <citation type="journal article" date="2006" name="Science">
        <title>The consensus coding sequences of human breast and colorectal cancers.</title>
        <authorList>
            <person name="Sjoeblom T."/>
            <person name="Jones S."/>
            <person name="Wood L.D."/>
            <person name="Parsons D.W."/>
            <person name="Lin J."/>
            <person name="Barber T.D."/>
            <person name="Mandelker D."/>
            <person name="Leary R.J."/>
            <person name="Ptak J."/>
            <person name="Silliman N."/>
            <person name="Szabo S."/>
            <person name="Buckhaults P."/>
            <person name="Farrell C."/>
            <person name="Meeh P."/>
            <person name="Markowitz S.D."/>
            <person name="Willis J."/>
            <person name="Dawson D."/>
            <person name="Willson J.K.V."/>
            <person name="Gazdar A.F."/>
            <person name="Hartigan J."/>
            <person name="Wu L."/>
            <person name="Liu C."/>
            <person name="Parmigiani G."/>
            <person name="Park B.H."/>
            <person name="Bachman K.E."/>
            <person name="Papadopoulos N."/>
            <person name="Vogelstein B."/>
            <person name="Kinzler K.W."/>
            <person name="Velculescu V.E."/>
        </authorList>
    </citation>
    <scope>VARIANT [LARGE SCALE ANALYSIS] PHE-315</scope>
</reference>
<reference key="9">
    <citation type="journal article" date="2016" name="Genes Cells">
        <title>Glucose-regulated protein 78 (GRP78) binds directly to PIP3 phosphatase SKIP and determines its localization.</title>
        <authorList>
            <person name="Ijuin T."/>
            <person name="Hatano N."/>
            <person name="Takenawa T."/>
        </authorList>
    </citation>
    <scope>INTERACTION WITH GPR78 AND PAK1</scope>
    <scope>REGION</scope>
    <scope>SUBCELLULAR LOCATION</scope>
</reference>
<reference key="10">
    <citation type="journal article" date="2017" name="Am. J. Hum. Genet.">
        <title>Mutations in INPP5K, Encoding a Phosphoinositide 5-Phosphatase, Cause Congenital muscular dystrophy with cataracts and mild cognitive impairment.</title>
        <authorList>
            <person name="Wiessner M."/>
            <person name="Roos A."/>
            <person name="Munn C.J."/>
            <person name="Viswanathan R."/>
            <person name="Whyte T."/>
            <person name="Cox D."/>
            <person name="Schoser B."/>
            <person name="Sewry C."/>
            <person name="Roper H."/>
            <person name="Phadke R."/>
            <person name="Marini Bettolo C."/>
            <person name="Barresi R."/>
            <person name="Charlton R."/>
            <person name="Boennemann C.G."/>
            <person name="Abath Neto O."/>
            <person name="Reed U.C."/>
            <person name="Zanoteli E."/>
            <person name="Araujo Martins Moreno C."/>
            <person name="Ertl-Wagner B."/>
            <person name="Stucka R."/>
            <person name="De Goede C."/>
            <person name="Borges da Silva T."/>
            <person name="Hathazi D."/>
            <person name="Dell'Aica M."/>
            <person name="Zahedi R.P."/>
            <person name="Thiele S."/>
            <person name="Mueller J."/>
            <person name="Kingston H."/>
            <person name="Mueller S."/>
            <person name="Curtis E."/>
            <person name="Walter M.C."/>
            <person name="Strom T.M."/>
            <person name="Straub V."/>
            <person name="Bushby K."/>
            <person name="Muntoni F."/>
            <person name="Swan L.E."/>
            <person name="Lochmueller H."/>
            <person name="Senderek J."/>
        </authorList>
    </citation>
    <scope>FUNCTION</scope>
    <scope>CATALYTIC ACTIVITY</scope>
    <scope>SUBCELLULAR LOCATION</scope>
    <scope>INVOLVEMENT IN MDCCAID</scope>
    <scope>VARIANTS MDCCAID THR-50; SER-294 DEL; CYS-300 AND THR-363</scope>
    <scope>CHARACTERIZATION OF VARIANTS MDCCAID THR-50; SER-294 DEL; CYS-300 AND THR-363</scope>
    <scope>MUTAGENESIS OF ASP-310</scope>
</reference>
<reference key="11">
    <citation type="journal article" date="2017" name="Am. J. Hum. Genet.">
        <title>Mutations in INPP5K cause a form of Congenital Muscular Dystrophy overlapping Marinesco-Sjoegren Syndrome and dystroglycanopathy.</title>
        <authorList>
            <person name="Osborn D.P."/>
            <person name="Pond H.L."/>
            <person name="Mazaheri N."/>
            <person name="Dejardin J."/>
            <person name="Munn C.J."/>
            <person name="Mushref K."/>
            <person name="Cauley E.S."/>
            <person name="Moroni I."/>
            <person name="Pasanisi M.B."/>
            <person name="Sellars E.A."/>
            <person name="Hill R.S."/>
            <person name="Partlow J.N."/>
            <person name="Willaert R.K."/>
            <person name="Bharj J."/>
            <person name="Malamiri R.A."/>
            <person name="Galehdari H."/>
            <person name="Shariati G."/>
            <person name="Maroofian R."/>
            <person name="Mora M."/>
            <person name="Swan L.E."/>
            <person name="Voit T."/>
            <person name="Conti F.J."/>
            <person name="Jamshidi Y."/>
            <person name="Manzini M.C."/>
        </authorList>
    </citation>
    <scope>FUNCTION</scope>
    <scope>CATALYTIC ACTIVITY</scope>
    <scope>VARIANTS MDCCAID MET-23; VAL-93; SER-140 AND ASN-269</scope>
    <scope>CHARACTERIZATION OF VARIANTS MDCCAID MET-23; VAL-93; SER-140 AND ASN-269</scope>
    <scope>MUTAGENESIS OF ASP-310</scope>
</reference>
<keyword id="KW-0025">Alternative splicing</keyword>
<keyword id="KW-0898">Cataract</keyword>
<keyword id="KW-0912">Congenital muscular dystrophy</keyword>
<keyword id="KW-0963">Cytoplasm</keyword>
<keyword id="KW-0225">Disease variant</keyword>
<keyword id="KW-0256">Endoplasmic reticulum</keyword>
<keyword id="KW-0378">Hydrolase</keyword>
<keyword id="KW-0991">Intellectual disability</keyword>
<keyword id="KW-0443">Lipid metabolism</keyword>
<keyword id="KW-1267">Proteomics identification</keyword>
<keyword id="KW-1185">Reference proteome</keyword>
<comment type="function">
    <text evidence="1 3 5 8 9">Inositol 5-phosphatase which acts on inositol 1,4,5-trisphosphate, inositol 1,3,4,5-tetrakisphosphate, phosphatidylinositol 4,5-bisphosphate and phosphatidylinositol 3,4,5-trisphosphate (PubMed:10753883, PubMed:16824732). Has 6-fold higher affinity for phosphatidylinositol 4,5-bisphosphate than for inositol 1,4,5-trisphosphate (PubMed:10753883). Negatively regulates assembly of the actin cytoskeleton. Controls insulin-dependent glucose uptake among inositol 3,4,5-trisphosphate phosphatases; therefore, is the specific regulator for insulin signaling in skeletal muscle (By similarity).</text>
</comment>
<comment type="catalytic activity">
    <reaction evidence="3 8 9">
        <text>1D-myo-inositol 1,4,5-trisphosphate + H2O = 1D-myo-inositol 1,4-bisphosphate + phosphate</text>
        <dbReference type="Rhea" id="RHEA:19797"/>
        <dbReference type="ChEBI" id="CHEBI:15377"/>
        <dbReference type="ChEBI" id="CHEBI:43474"/>
        <dbReference type="ChEBI" id="CHEBI:58282"/>
        <dbReference type="ChEBI" id="CHEBI:203600"/>
        <dbReference type="EC" id="3.1.3.56"/>
    </reaction>
    <physiologicalReaction direction="left-to-right" evidence="13 15 16">
        <dbReference type="Rhea" id="RHEA:19798"/>
    </physiologicalReaction>
</comment>
<comment type="catalytic activity">
    <reaction evidence="3">
        <text>1D-myo-inositol 1,3,4,5-tetrakisphosphate + H2O = 1D-myo-inositol 1,3,4-trisphosphate + phosphate</text>
        <dbReference type="Rhea" id="RHEA:11392"/>
        <dbReference type="ChEBI" id="CHEBI:15377"/>
        <dbReference type="ChEBI" id="CHEBI:43474"/>
        <dbReference type="ChEBI" id="CHEBI:57895"/>
        <dbReference type="ChEBI" id="CHEBI:58414"/>
        <dbReference type="EC" id="3.1.3.56"/>
    </reaction>
    <physiologicalReaction direction="left-to-right" evidence="13">
        <dbReference type="Rhea" id="RHEA:11393"/>
    </physiologicalReaction>
</comment>
<comment type="catalytic activity">
    <reaction evidence="3">
        <text>a 1,2-diacyl-sn-glycero-3-phospho-(1D-myo-inositol-4,5-bisphosphate) + H2O = a 1,2-diacyl-sn-glycero-3-phospho-(1D-myo-inositol 4-phosphate) + phosphate</text>
        <dbReference type="Rhea" id="RHEA:22764"/>
        <dbReference type="ChEBI" id="CHEBI:15377"/>
        <dbReference type="ChEBI" id="CHEBI:43474"/>
        <dbReference type="ChEBI" id="CHEBI:58178"/>
        <dbReference type="ChEBI" id="CHEBI:58456"/>
        <dbReference type="EC" id="3.1.3.36"/>
    </reaction>
    <physiologicalReaction direction="left-to-right" evidence="13">
        <dbReference type="Rhea" id="RHEA:22765"/>
    </physiologicalReaction>
</comment>
<comment type="catalytic activity">
    <reaction evidence="3 5">
        <text>a 1,2-diacyl-sn-glycero-3-phospho-(1D-myo-inositol-3,4,5-trisphosphate) + H2O = a 1,2-diacyl-sn-glycero-3-phospho-(1D-myo-inositol-3,4-bisphosphate) + phosphate</text>
        <dbReference type="Rhea" id="RHEA:25528"/>
        <dbReference type="ChEBI" id="CHEBI:15377"/>
        <dbReference type="ChEBI" id="CHEBI:43474"/>
        <dbReference type="ChEBI" id="CHEBI:57658"/>
        <dbReference type="ChEBI" id="CHEBI:57836"/>
        <dbReference type="EC" id="3.1.3.86"/>
    </reaction>
    <physiologicalReaction direction="left-to-right" evidence="13">
        <dbReference type="Rhea" id="RHEA:25529"/>
    </physiologicalReaction>
</comment>
<comment type="catalytic activity">
    <reaction evidence="3 5">
        <text>1,2-dioctanoyl-sn-glycero-3-phospho-(1D-myo-inositol-3,4,5-trisphosphate) + H2O = 1,2-dioctanoyl-sn-glycero-3-phospho-(1D-myo-inositol-3,4-bisphosphate) + phosphate</text>
        <dbReference type="Rhea" id="RHEA:43548"/>
        <dbReference type="ChEBI" id="CHEBI:15377"/>
        <dbReference type="ChEBI" id="CHEBI:43474"/>
        <dbReference type="ChEBI" id="CHEBI:83416"/>
        <dbReference type="ChEBI" id="CHEBI:83417"/>
    </reaction>
    <physiologicalReaction direction="right-to-left" evidence="14">
        <dbReference type="Rhea" id="RHEA:43550"/>
    </physiologicalReaction>
</comment>
<comment type="biophysicochemical properties">
    <kinetics>
        <KM evidence="3">180 uM for phosphatidylinositol 4,5-bisphosphate</KM>
        <KM evidence="3">1.15 mM for phosphatidylinositol 3,4,5-trisphosphate</KM>
    </kinetics>
</comment>
<comment type="subunit">
    <text evidence="7">Interacts with GPR78; necessary for INPP5K localization at the endoplasmic reticulum. Interacts with PAK1; competes with GPR78.</text>
</comment>
<comment type="interaction">
    <interactant intactId="EBI-749162">
        <id>Q9BT40</id>
    </interactant>
    <interactant intactId="EBI-714543">
        <id>Q15041</id>
        <label>ARL6IP1</label>
    </interactant>
    <organismsDiffer>false</organismsDiffer>
    <experiments>5</experiments>
</comment>
<comment type="interaction">
    <interactant intactId="EBI-749162">
        <id>Q9BT40</id>
    </interactant>
    <interactant intactId="EBI-2606700">
        <id>P18859</id>
        <label>ATP5PF</label>
    </interactant>
    <organismsDiffer>false</organismsDiffer>
    <experiments>3</experiments>
</comment>
<comment type="interaction">
    <interactant intactId="EBI-749162">
        <id>Q9BT40</id>
    </interactant>
    <interactant intactId="EBI-3943864">
        <id>Q8N9I5</id>
        <label>FADS6</label>
    </interactant>
    <organismsDiffer>false</organismsDiffer>
    <experiments>3</experiments>
</comment>
<comment type="interaction">
    <interactant intactId="EBI-749162">
        <id>Q9BT40</id>
    </interactant>
    <interactant intactId="EBI-743099">
        <id>Q969F0</id>
        <label>FATE1</label>
    </interactant>
    <organismsDiffer>false</organismsDiffer>
    <experiments>7</experiments>
</comment>
<comment type="interaction">
    <interactant intactId="EBI-749162">
        <id>Q9BT40</id>
    </interactant>
    <interactant intactId="EBI-4402607">
        <id>Q9Y3E0</id>
        <label>GOLT1B</label>
    </interactant>
    <organismsDiffer>false</organismsDiffer>
    <experiments>3</experiments>
</comment>
<comment type="interaction">
    <interactant intactId="EBI-749162">
        <id>Q9BT40</id>
    </interactant>
    <interactant intactId="EBI-2432309">
        <id>Q92876</id>
        <label>KLK6</label>
    </interactant>
    <organismsDiffer>false</organismsDiffer>
    <experiments>3</experiments>
</comment>
<comment type="interaction">
    <interactant intactId="EBI-749162">
        <id>Q9BT40</id>
    </interactant>
    <interactant intactId="EBI-948001">
        <id>Q15323</id>
        <label>KRT31</label>
    </interactant>
    <organismsDiffer>false</organismsDiffer>
    <experiments>7</experiments>
</comment>
<comment type="interaction">
    <interactant intactId="EBI-749162">
        <id>Q9BT40</id>
    </interactant>
    <interactant intactId="EBI-739832">
        <id>Q8TBB1</id>
        <label>LNX1</label>
    </interactant>
    <organismsDiffer>false</organismsDiffer>
    <experiments>3</experiments>
</comment>
<comment type="interaction">
    <interactant intactId="EBI-749162">
        <id>Q9BT40</id>
    </interactant>
    <interactant intactId="EBI-712181">
        <id>Q15013</id>
        <label>MAD2L1BP</label>
    </interactant>
    <organismsDiffer>false</organismsDiffer>
    <experiments>14</experiments>
</comment>
<comment type="interaction">
    <interactant intactId="EBI-749162">
        <id>Q9BT40</id>
    </interactant>
    <interactant intactId="EBI-741171">
        <id>Q96AL5</id>
        <label>PBX3</label>
    </interactant>
    <organismsDiffer>false</organismsDiffer>
    <experiments>3</experiments>
</comment>
<comment type="interaction">
    <interactant intactId="EBI-749162">
        <id>Q9BT40</id>
    </interactant>
    <interactant intactId="EBI-4402330">
        <id>O95562</id>
        <label>SFT2D2</label>
    </interactant>
    <organismsDiffer>false</organismsDiffer>
    <experiments>3</experiments>
</comment>
<comment type="interaction">
    <interactant intactId="EBI-749162">
        <id>Q9BT40</id>
    </interactant>
    <interactant intactId="EBI-1044859">
        <id>Q9UBN6</id>
        <label>TNFRSF10D</label>
    </interactant>
    <organismsDiffer>false</organismsDiffer>
    <experiments>3</experiments>
</comment>
<comment type="subcellular location">
    <subcellularLocation>
        <location evidence="4 7 8">Endoplasmic reticulum</location>
    </subcellularLocation>
    <subcellularLocation>
        <location evidence="3">Cytoplasm</location>
    </subcellularLocation>
    <text evidence="3 4 7">Following stimulation with EGF, translocates to membrane ruffles (PubMed:12536145, PubMed:26940976). Concentrated at the periphery of the nucleus (PubMed:10753883).</text>
</comment>
<comment type="alternative products">
    <event type="alternative splicing"/>
    <isoform>
        <id>Q9BT40-1</id>
        <name evidence="3">1</name>
        <sequence type="displayed"/>
    </isoform>
    <isoform>
        <id>Q9BT40-2</id>
        <name evidence="3">2</name>
        <sequence type="described" ref="VSP_050612"/>
    </isoform>
</comment>
<comment type="tissue specificity">
    <text evidence="3">Ubiquitously expressed with highest levels in skeletal muscle, heart and kidney.</text>
</comment>
<comment type="disease" evidence="8 9">
    <disease id="DI-04992">
        <name>Muscular dystrophy, congenital, with cataracts and impaired intellectual development</name>
        <acronym>MDCCAID</acronym>
        <description>An autosomal recessive form of muscular dystrophy with onset in early childhood and characterized by progressive muscle weakness. Almost all patients also have early-onset cataracts and intellectual disability of varying severity. Some patients have seizures.</description>
        <dbReference type="MIM" id="617404"/>
    </disease>
    <text>The disease is caused by variants affecting the gene represented in this entry.</text>
</comment>
<comment type="similarity">
    <text evidence="12">Belongs to the inositol 1,4,5-trisphosphate 5-phosphatase type II family.</text>
</comment>
<organism evidence="18">
    <name type="scientific">Homo sapiens</name>
    <name type="common">Human</name>
    <dbReference type="NCBI Taxonomy" id="9606"/>
    <lineage>
        <taxon>Eukaryota</taxon>
        <taxon>Metazoa</taxon>
        <taxon>Chordata</taxon>
        <taxon>Craniata</taxon>
        <taxon>Vertebrata</taxon>
        <taxon>Euteleostomi</taxon>
        <taxon>Mammalia</taxon>
        <taxon>Eutheria</taxon>
        <taxon>Euarchontoglires</taxon>
        <taxon>Primates</taxon>
        <taxon>Haplorrhini</taxon>
        <taxon>Catarrhini</taxon>
        <taxon>Hominidae</taxon>
        <taxon>Homo</taxon>
    </lineage>
</organism>
<dbReference type="EC" id="3.1.3.56" evidence="3 8 9"/>
<dbReference type="EC" id="3.1.3.86" evidence="3 5"/>
<dbReference type="EC" id="3.1.3.36" evidence="3"/>
<dbReference type="EMBL" id="AB036829">
    <property type="protein sequence ID" value="BAA92340.1"/>
    <property type="molecule type" value="mRNA"/>
</dbReference>
<dbReference type="EMBL" id="AB036830">
    <property type="protein sequence ID" value="BAA92341.1"/>
    <property type="molecule type" value="mRNA"/>
</dbReference>
<dbReference type="EMBL" id="AB036831">
    <property type="protein sequence ID" value="BAA92342.1"/>
    <property type="molecule type" value="Genomic_DNA"/>
</dbReference>
<dbReference type="EMBL" id="AK312585">
    <property type="protein sequence ID" value="BAG35479.1"/>
    <property type="molecule type" value="mRNA"/>
</dbReference>
<dbReference type="EMBL" id="AK312844">
    <property type="protein sequence ID" value="BAG35697.1"/>
    <property type="molecule type" value="mRNA"/>
</dbReference>
<dbReference type="EMBL" id="CH471108">
    <property type="protein sequence ID" value="EAW90614.1"/>
    <property type="molecule type" value="Genomic_DNA"/>
</dbReference>
<dbReference type="EMBL" id="CH471108">
    <property type="protein sequence ID" value="EAW90615.1"/>
    <property type="molecule type" value="Genomic_DNA"/>
</dbReference>
<dbReference type="EMBL" id="CH471108">
    <property type="protein sequence ID" value="EAW90618.1"/>
    <property type="molecule type" value="Genomic_DNA"/>
</dbReference>
<dbReference type="EMBL" id="BC004362">
    <property type="protein sequence ID" value="AAH04362.1"/>
    <property type="molecule type" value="mRNA"/>
</dbReference>
<dbReference type="EMBL" id="U45973">
    <property type="protein sequence ID" value="AAB03214.1"/>
    <property type="molecule type" value="mRNA"/>
</dbReference>
<dbReference type="CCDS" id="CCDS11004.1">
    <molecule id="Q9BT40-1"/>
</dbReference>
<dbReference type="CCDS" id="CCDS11005.1">
    <molecule id="Q9BT40-2"/>
</dbReference>
<dbReference type="RefSeq" id="NP_001129114.1">
    <molecule id="Q9BT40-2"/>
    <property type="nucleotide sequence ID" value="NM_001135642.2"/>
</dbReference>
<dbReference type="RefSeq" id="NP_057616.2">
    <molecule id="Q9BT40-1"/>
    <property type="nucleotide sequence ID" value="NM_016532.3"/>
</dbReference>
<dbReference type="RefSeq" id="NP_570122.1">
    <molecule id="Q9BT40-2"/>
    <property type="nucleotide sequence ID" value="NM_130766.3"/>
</dbReference>
<dbReference type="RefSeq" id="XP_005256740.1">
    <property type="nucleotide sequence ID" value="XM_005256683.2"/>
</dbReference>
<dbReference type="RefSeq" id="XP_011522236.1">
    <molecule id="Q9BT40-2"/>
    <property type="nucleotide sequence ID" value="XM_011523934.2"/>
</dbReference>
<dbReference type="RefSeq" id="XP_016880244.1">
    <property type="nucleotide sequence ID" value="XM_017024755.1"/>
</dbReference>
<dbReference type="RefSeq" id="XP_016880245.1">
    <property type="nucleotide sequence ID" value="XM_017024756.1"/>
</dbReference>
<dbReference type="RefSeq" id="XP_024306570.1">
    <molecule id="Q9BT40-2"/>
    <property type="nucleotide sequence ID" value="XM_024450802.2"/>
</dbReference>
<dbReference type="RefSeq" id="XP_054172472.1">
    <molecule id="Q9BT40-2"/>
    <property type="nucleotide sequence ID" value="XM_054316497.1"/>
</dbReference>
<dbReference type="RefSeq" id="XP_054172473.1">
    <molecule id="Q9BT40-2"/>
    <property type="nucleotide sequence ID" value="XM_054316498.1"/>
</dbReference>
<dbReference type="SMR" id="Q9BT40"/>
<dbReference type="BioGRID" id="119720">
    <property type="interactions" value="66"/>
</dbReference>
<dbReference type="CORUM" id="Q9BT40"/>
<dbReference type="FunCoup" id="Q9BT40">
    <property type="interactions" value="2665"/>
</dbReference>
<dbReference type="IntAct" id="Q9BT40">
    <property type="interactions" value="50"/>
</dbReference>
<dbReference type="MINT" id="Q9BT40"/>
<dbReference type="STRING" id="9606.ENSP00000413937"/>
<dbReference type="SwissLipids" id="SLP:000000957"/>
<dbReference type="DEPOD" id="INPP5K"/>
<dbReference type="iPTMnet" id="Q9BT40"/>
<dbReference type="PhosphoSitePlus" id="Q9BT40"/>
<dbReference type="BioMuta" id="INPP5K"/>
<dbReference type="DMDM" id="116242791"/>
<dbReference type="jPOST" id="Q9BT40"/>
<dbReference type="MassIVE" id="Q9BT40"/>
<dbReference type="PaxDb" id="9606-ENSP00000413937"/>
<dbReference type="PeptideAtlas" id="Q9BT40"/>
<dbReference type="ProteomicsDB" id="78948">
    <molecule id="Q9BT40-1"/>
</dbReference>
<dbReference type="ProteomicsDB" id="78949">
    <molecule id="Q9BT40-2"/>
</dbReference>
<dbReference type="Pumba" id="Q9BT40"/>
<dbReference type="Antibodypedia" id="22714">
    <property type="antibodies" value="142 antibodies from 25 providers"/>
</dbReference>
<dbReference type="DNASU" id="51763"/>
<dbReference type="Ensembl" id="ENST00000320345.10">
    <molecule id="Q9BT40-2"/>
    <property type="protein sequence ID" value="ENSP00000318476.6"/>
    <property type="gene ID" value="ENSG00000132376.20"/>
</dbReference>
<dbReference type="Ensembl" id="ENST00000406424.8">
    <molecule id="Q9BT40-2"/>
    <property type="protein sequence ID" value="ENSP00000385177.4"/>
    <property type="gene ID" value="ENSG00000132376.20"/>
</dbReference>
<dbReference type="Ensembl" id="ENST00000421807.7">
    <molecule id="Q9BT40-1"/>
    <property type="protein sequence ID" value="ENSP00000413937.2"/>
    <property type="gene ID" value="ENSG00000132376.20"/>
</dbReference>
<dbReference type="GeneID" id="51763"/>
<dbReference type="KEGG" id="hsa:51763"/>
<dbReference type="MANE-Select" id="ENST00000421807.7">
    <property type="protein sequence ID" value="ENSP00000413937.2"/>
    <property type="RefSeq nucleotide sequence ID" value="NM_016532.4"/>
    <property type="RefSeq protein sequence ID" value="NP_057616.2"/>
</dbReference>
<dbReference type="UCSC" id="uc002fsr.4">
    <molecule id="Q9BT40-1"/>
    <property type="organism name" value="human"/>
</dbReference>
<dbReference type="AGR" id="HGNC:33882"/>
<dbReference type="CTD" id="51763"/>
<dbReference type="DisGeNET" id="51763"/>
<dbReference type="GeneCards" id="INPP5K"/>
<dbReference type="HGNC" id="HGNC:33882">
    <property type="gene designation" value="INPP5K"/>
</dbReference>
<dbReference type="HPA" id="ENSG00000132376">
    <property type="expression patterns" value="Tissue enhanced (choroid)"/>
</dbReference>
<dbReference type="MalaCards" id="INPP5K"/>
<dbReference type="MIM" id="607875">
    <property type="type" value="gene"/>
</dbReference>
<dbReference type="MIM" id="617404">
    <property type="type" value="phenotype"/>
</dbReference>
<dbReference type="neXtProt" id="NX_Q9BT40"/>
<dbReference type="OpenTargets" id="ENSG00000132376"/>
<dbReference type="Orphanet" id="662184">
    <property type="disease" value="Congenital muscular dystrophy-cataract-intellectual disability syndrome"/>
</dbReference>
<dbReference type="PharmGKB" id="PA164720951"/>
<dbReference type="VEuPathDB" id="HostDB:ENSG00000132376"/>
<dbReference type="eggNOG" id="KOG0565">
    <property type="taxonomic scope" value="Eukaryota"/>
</dbReference>
<dbReference type="GeneTree" id="ENSGT00940000156538"/>
<dbReference type="InParanoid" id="Q9BT40"/>
<dbReference type="OMA" id="NSECQHI"/>
<dbReference type="OrthoDB" id="62798at2759"/>
<dbReference type="PAN-GO" id="Q9BT40">
    <property type="GO annotations" value="13 GO annotations based on evolutionary models"/>
</dbReference>
<dbReference type="PhylomeDB" id="Q9BT40"/>
<dbReference type="TreeFam" id="TF317034"/>
<dbReference type="BioCyc" id="MetaCyc:HS05626-MONOMER"/>
<dbReference type="BRENDA" id="3.1.3.56">
    <property type="organism ID" value="2681"/>
</dbReference>
<dbReference type="PathwayCommons" id="Q9BT40"/>
<dbReference type="Reactome" id="R-HSA-1660499">
    <property type="pathway name" value="Synthesis of PIPs at the plasma membrane"/>
</dbReference>
<dbReference type="SignaLink" id="Q9BT40"/>
<dbReference type="BioGRID-ORCS" id="51763">
    <property type="hits" value="37 hits in 1174 CRISPR screens"/>
</dbReference>
<dbReference type="ChiTaRS" id="INPP5K">
    <property type="organism name" value="human"/>
</dbReference>
<dbReference type="GeneWiki" id="SKIP"/>
<dbReference type="GenomeRNAi" id="51763"/>
<dbReference type="Pharos" id="Q9BT40">
    <property type="development level" value="Tbio"/>
</dbReference>
<dbReference type="PRO" id="PR:Q9BT40"/>
<dbReference type="Proteomes" id="UP000005640">
    <property type="component" value="Chromosome 17"/>
</dbReference>
<dbReference type="RNAct" id="Q9BT40">
    <property type="molecule type" value="protein"/>
</dbReference>
<dbReference type="Bgee" id="ENSG00000132376">
    <property type="expression patterns" value="Expressed in pigmented layer of retina and 208 other cell types or tissues"/>
</dbReference>
<dbReference type="ExpressionAtlas" id="Q9BT40">
    <property type="expression patterns" value="baseline and differential"/>
</dbReference>
<dbReference type="GO" id="GO:0005737">
    <property type="term" value="C:cytoplasm"/>
    <property type="evidence" value="ECO:0000250"/>
    <property type="project" value="UniProtKB"/>
</dbReference>
<dbReference type="GO" id="GO:0005829">
    <property type="term" value="C:cytosol"/>
    <property type="evidence" value="ECO:0000314"/>
    <property type="project" value="UniProtKB"/>
</dbReference>
<dbReference type="GO" id="GO:0005783">
    <property type="term" value="C:endoplasmic reticulum"/>
    <property type="evidence" value="ECO:0000314"/>
    <property type="project" value="UniProtKB"/>
</dbReference>
<dbReference type="GO" id="GO:0016020">
    <property type="term" value="C:membrane"/>
    <property type="evidence" value="ECO:0000314"/>
    <property type="project" value="MGI"/>
</dbReference>
<dbReference type="GO" id="GO:0043005">
    <property type="term" value="C:neuron projection"/>
    <property type="evidence" value="ECO:0000314"/>
    <property type="project" value="UniProtKB"/>
</dbReference>
<dbReference type="GO" id="GO:0005634">
    <property type="term" value="C:nucleus"/>
    <property type="evidence" value="ECO:0000314"/>
    <property type="project" value="UniProtKB"/>
</dbReference>
<dbReference type="GO" id="GO:0048471">
    <property type="term" value="C:perinuclear region of cytoplasm"/>
    <property type="evidence" value="ECO:0000314"/>
    <property type="project" value="UniProtKB"/>
</dbReference>
<dbReference type="GO" id="GO:0005886">
    <property type="term" value="C:plasma membrane"/>
    <property type="evidence" value="ECO:0000314"/>
    <property type="project" value="UniProtKB"/>
</dbReference>
<dbReference type="GO" id="GO:0001726">
    <property type="term" value="C:ruffle"/>
    <property type="evidence" value="ECO:0000314"/>
    <property type="project" value="MGI"/>
</dbReference>
<dbReference type="GO" id="GO:0032587">
    <property type="term" value="C:ruffle membrane"/>
    <property type="evidence" value="ECO:0000314"/>
    <property type="project" value="UniProtKB"/>
</dbReference>
<dbReference type="GO" id="GO:0005802">
    <property type="term" value="C:trans-Golgi network"/>
    <property type="evidence" value="ECO:0000314"/>
    <property type="project" value="UniProtKB"/>
</dbReference>
<dbReference type="GO" id="GO:0016312">
    <property type="term" value="F:inositol bisphosphate phosphatase activity"/>
    <property type="evidence" value="ECO:0000314"/>
    <property type="project" value="MGI"/>
</dbReference>
<dbReference type="GO" id="GO:0046030">
    <property type="term" value="F:inositol trisphosphate phosphatase activity"/>
    <property type="evidence" value="ECO:0000314"/>
    <property type="project" value="MGI"/>
</dbReference>
<dbReference type="GO" id="GO:0052659">
    <property type="term" value="F:inositol-1,3,4,5-tetrakisphosphate 5-phosphatase activity"/>
    <property type="evidence" value="ECO:0007669"/>
    <property type="project" value="RHEA"/>
</dbReference>
<dbReference type="GO" id="GO:0052658">
    <property type="term" value="F:inositol-1,4,5-trisphosphate 5-phosphatase activity"/>
    <property type="evidence" value="ECO:0007669"/>
    <property type="project" value="RHEA"/>
</dbReference>
<dbReference type="GO" id="GO:0042577">
    <property type="term" value="F:lipid phosphatase activity"/>
    <property type="evidence" value="ECO:0000303"/>
    <property type="project" value="UniProtKB"/>
</dbReference>
<dbReference type="GO" id="GO:0034595">
    <property type="term" value="F:phosphatidylinositol phosphate 5-phosphatase activity"/>
    <property type="evidence" value="ECO:0000315"/>
    <property type="project" value="UniProtKB"/>
</dbReference>
<dbReference type="GO" id="GO:0034594">
    <property type="term" value="F:phosphatidylinositol trisphosphate phosphatase activity"/>
    <property type="evidence" value="ECO:0000314"/>
    <property type="project" value="UniProtKB"/>
</dbReference>
<dbReference type="GO" id="GO:0034485">
    <property type="term" value="F:phosphatidylinositol-3,4,5-trisphosphate 5-phosphatase activity"/>
    <property type="evidence" value="ECO:0000314"/>
    <property type="project" value="UniProtKB"/>
</dbReference>
<dbReference type="GO" id="GO:0004439">
    <property type="term" value="F:phosphatidylinositol-4,5-bisphosphate 5-phosphatase activity"/>
    <property type="evidence" value="ECO:0000315"/>
    <property type="project" value="UniProtKB"/>
</dbReference>
<dbReference type="GO" id="GO:0005000">
    <property type="term" value="F:vasopressin receptor activity"/>
    <property type="evidence" value="ECO:0000250"/>
    <property type="project" value="UniProtKB"/>
</dbReference>
<dbReference type="GO" id="GO:0030036">
    <property type="term" value="P:actin cytoskeleton organization"/>
    <property type="evidence" value="ECO:0000303"/>
    <property type="project" value="UniProtKB"/>
</dbReference>
<dbReference type="GO" id="GO:0071320">
    <property type="term" value="P:cellular response to cAMP"/>
    <property type="evidence" value="ECO:0000250"/>
    <property type="project" value="UniProtKB"/>
</dbReference>
<dbReference type="GO" id="GO:0071364">
    <property type="term" value="P:cellular response to epidermal growth factor stimulus"/>
    <property type="evidence" value="ECO:0000314"/>
    <property type="project" value="UniProtKB"/>
</dbReference>
<dbReference type="GO" id="GO:0032870">
    <property type="term" value="P:cellular response to hormone stimulus"/>
    <property type="evidence" value="ECO:0000250"/>
    <property type="project" value="UniProtKB"/>
</dbReference>
<dbReference type="GO" id="GO:0032869">
    <property type="term" value="P:cellular response to insulin stimulus"/>
    <property type="evidence" value="ECO:0000314"/>
    <property type="project" value="UniProtKB"/>
</dbReference>
<dbReference type="GO" id="GO:0071356">
    <property type="term" value="P:cellular response to tumor necrosis factor"/>
    <property type="evidence" value="ECO:0000314"/>
    <property type="project" value="UniProtKB"/>
</dbReference>
<dbReference type="GO" id="GO:0007186">
    <property type="term" value="P:G protein-coupled receptor signaling pathway"/>
    <property type="evidence" value="ECO:0000250"/>
    <property type="project" value="UniProtKB"/>
</dbReference>
<dbReference type="GO" id="GO:0042593">
    <property type="term" value="P:glucose homeostasis"/>
    <property type="evidence" value="ECO:0000250"/>
    <property type="project" value="UniProtKB"/>
</dbReference>
<dbReference type="GO" id="GO:0001701">
    <property type="term" value="P:in utero embryonic development"/>
    <property type="evidence" value="ECO:0007669"/>
    <property type="project" value="Ensembl"/>
</dbReference>
<dbReference type="GO" id="GO:0043922">
    <property type="term" value="P:negative regulation by host of viral transcription"/>
    <property type="evidence" value="ECO:0000314"/>
    <property type="project" value="UniProtKB"/>
</dbReference>
<dbReference type="GO" id="GO:0051926">
    <property type="term" value="P:negative regulation of calcium ion transport"/>
    <property type="evidence" value="ECO:0000314"/>
    <property type="project" value="UniProtKB"/>
</dbReference>
<dbReference type="GO" id="GO:0010829">
    <property type="term" value="P:negative regulation of D-glucose transmembrane transport"/>
    <property type="evidence" value="ECO:0000314"/>
    <property type="project" value="UniProtKB"/>
</dbReference>
<dbReference type="GO" id="GO:0035305">
    <property type="term" value="P:negative regulation of dephosphorylation"/>
    <property type="evidence" value="ECO:0000250"/>
    <property type="project" value="UniProtKB"/>
</dbReference>
<dbReference type="GO" id="GO:0045892">
    <property type="term" value="P:negative regulation of DNA-templated transcription"/>
    <property type="evidence" value="ECO:0000250"/>
    <property type="project" value="UniProtKB"/>
</dbReference>
<dbReference type="GO" id="GO:0045719">
    <property type="term" value="P:negative regulation of glycogen biosynthetic process"/>
    <property type="evidence" value="ECO:0000314"/>
    <property type="project" value="UniProtKB"/>
</dbReference>
<dbReference type="GO" id="GO:0046627">
    <property type="term" value="P:negative regulation of insulin receptor signaling pathway"/>
    <property type="evidence" value="ECO:0000314"/>
    <property type="project" value="UniProtKB"/>
</dbReference>
<dbReference type="GO" id="GO:0051898">
    <property type="term" value="P:negative regulation of phosphatidylinositol 3-kinase/protein kinase B signal transduction"/>
    <property type="evidence" value="ECO:0000314"/>
    <property type="project" value="UniProtKB"/>
</dbReference>
<dbReference type="GO" id="GO:0090315">
    <property type="term" value="P:negative regulation of protein targeting to membrane"/>
    <property type="evidence" value="ECO:0000314"/>
    <property type="project" value="UniProtKB"/>
</dbReference>
<dbReference type="GO" id="GO:0045869">
    <property type="term" value="P:negative regulation of single stranded viral RNA replication via double stranded DNA intermediate"/>
    <property type="evidence" value="ECO:0000314"/>
    <property type="project" value="UniProtKB"/>
</dbReference>
<dbReference type="GO" id="GO:0051497">
    <property type="term" value="P:negative regulation of stress fiber assembly"/>
    <property type="evidence" value="ECO:0000314"/>
    <property type="project" value="UniProtKB"/>
</dbReference>
<dbReference type="GO" id="GO:0006661">
    <property type="term" value="P:phosphatidylinositol biosynthetic process"/>
    <property type="evidence" value="ECO:0000304"/>
    <property type="project" value="Reactome"/>
</dbReference>
<dbReference type="GO" id="GO:0046856">
    <property type="term" value="P:phosphatidylinositol dephosphorylation"/>
    <property type="evidence" value="ECO:0000314"/>
    <property type="project" value="UniProtKB"/>
</dbReference>
<dbReference type="GO" id="GO:0045893">
    <property type="term" value="P:positive regulation of DNA-templated transcription"/>
    <property type="evidence" value="ECO:0000250"/>
    <property type="project" value="UniProtKB"/>
</dbReference>
<dbReference type="GO" id="GO:2001153">
    <property type="term" value="P:positive regulation of renal water transport"/>
    <property type="evidence" value="ECO:0000250"/>
    <property type="project" value="UniProtKB"/>
</dbReference>
<dbReference type="GO" id="GO:0035810">
    <property type="term" value="P:positive regulation of urine volume"/>
    <property type="evidence" value="ECO:0000250"/>
    <property type="project" value="UniProtKB"/>
</dbReference>
<dbReference type="GO" id="GO:0072659">
    <property type="term" value="P:protein localization to plasma membrane"/>
    <property type="evidence" value="ECO:0000250"/>
    <property type="project" value="UniProtKB"/>
</dbReference>
<dbReference type="GO" id="GO:0005979">
    <property type="term" value="P:regulation of glycogen biosynthetic process"/>
    <property type="evidence" value="ECO:0000250"/>
    <property type="project" value="UniProtKB"/>
</dbReference>
<dbReference type="GO" id="GO:0097178">
    <property type="term" value="P:ruffle assembly"/>
    <property type="evidence" value="ECO:0000314"/>
    <property type="project" value="UniProtKB"/>
</dbReference>
<dbReference type="FunFam" id="2.60.40.2840:FF:000005">
    <property type="entry name" value="inositol polyphosphate 5-phosphatase K"/>
    <property type="match status" value="1"/>
</dbReference>
<dbReference type="FunFam" id="3.60.10.10:FF:000032">
    <property type="entry name" value="inositol polyphosphate 5-phosphatase K isoform X1"/>
    <property type="match status" value="1"/>
</dbReference>
<dbReference type="Gene3D" id="2.60.40.2840">
    <property type="match status" value="1"/>
</dbReference>
<dbReference type="Gene3D" id="3.60.10.10">
    <property type="entry name" value="Endonuclease/exonuclease/phosphatase"/>
    <property type="match status" value="1"/>
</dbReference>
<dbReference type="InterPro" id="IPR036691">
    <property type="entry name" value="Endo/exonu/phosph_ase_sf"/>
</dbReference>
<dbReference type="InterPro" id="IPR046985">
    <property type="entry name" value="IP5"/>
</dbReference>
<dbReference type="InterPro" id="IPR000300">
    <property type="entry name" value="IPPc"/>
</dbReference>
<dbReference type="InterPro" id="IPR041611">
    <property type="entry name" value="SKICH"/>
</dbReference>
<dbReference type="PANTHER" id="PTHR11200">
    <property type="entry name" value="INOSITOL 5-PHOSPHATASE"/>
    <property type="match status" value="1"/>
</dbReference>
<dbReference type="PANTHER" id="PTHR11200:SF117">
    <property type="entry name" value="INOSITOL POLYPHOSPHATE 5-PHOSPHATASE K"/>
    <property type="match status" value="1"/>
</dbReference>
<dbReference type="Pfam" id="PF22669">
    <property type="entry name" value="Exo_endo_phos2"/>
    <property type="match status" value="1"/>
</dbReference>
<dbReference type="Pfam" id="PF17751">
    <property type="entry name" value="SKICH"/>
    <property type="match status" value="1"/>
</dbReference>
<dbReference type="SMART" id="SM00128">
    <property type="entry name" value="IPPc"/>
    <property type="match status" value="1"/>
</dbReference>
<dbReference type="SUPFAM" id="SSF56219">
    <property type="entry name" value="DNase I-like"/>
    <property type="match status" value="1"/>
</dbReference>
<proteinExistence type="evidence at protein level"/>
<feature type="chain" id="PRO_0000209727" description="Inositol polyphosphate 5-phosphatase K">
    <location>
        <begin position="1"/>
        <end position="448"/>
    </location>
</feature>
<feature type="region of interest" description="Catalytic" evidence="2">
    <location>
        <begin position="16"/>
        <end position="318"/>
    </location>
</feature>
<feature type="region of interest" description="Required for interaction with GPR78 and PAK1" evidence="7">
    <location>
        <begin position="318"/>
        <end position="448"/>
    </location>
</feature>
<feature type="region of interest" description="Required for ruffle localization">
    <location>
        <begin position="321"/>
        <end position="448"/>
    </location>
</feature>
<feature type="splice variant" id="VSP_050612" description="In isoform 2." evidence="10 11">
    <location>
        <begin position="1"/>
        <end position="76"/>
    </location>
</feature>
<feature type="sequence variant" id="VAR_078998" description="In MDCCAID; decreased phosphatidylinositol-4,5-bisphosphate 5-phosphatase activity; dbSNP:rs750781027." evidence="9">
    <original>V</original>
    <variation>M</variation>
    <location>
        <position position="23"/>
    </location>
</feature>
<feature type="sequence variant" id="VAR_078999" description="In MDCCAID; decreased phosphatidylinositol-4,5-bisphosphate 5-phosphatase activity; shows normal localization indistinguishable from the wild-type; dbSNP:rs1060505038." evidence="8">
    <original>I</original>
    <variation>T</variation>
    <location>
        <position position="50"/>
    </location>
</feature>
<feature type="sequence variant" id="VAR_079000" description="In MDCCAID; decreased phosphatidylinositol-4,5-bisphosphate 5-phosphatase activity; dbSNP:rs1060505039." evidence="9">
    <original>M</original>
    <variation>V</variation>
    <location>
        <position position="93"/>
    </location>
</feature>
<feature type="sequence variant" id="VAR_079001" description="In MDCCAID; no phosphatidylinositol-4,5-bisphosphate 5-phosphatase activity; dbSNP:rs749383757." evidence="9">
    <original>G</original>
    <variation>S</variation>
    <location>
        <position position="140"/>
    </location>
</feature>
<feature type="sequence variant" id="VAR_079002" description="In MDCCAID; no phosphatidylinositol-4,5-bisphosphate 5-phosphatase activity; dbSNP:rs761612652." evidence="9">
    <original>D</original>
    <variation>N</variation>
    <location>
        <position position="269"/>
    </location>
</feature>
<feature type="sequence variant" id="VAR_079003" description="In MDCCAID; decreased phosphatidylinositol-4,5-bisphosphate 5-phosphatase activity; shows normal localization indistinguishable from the wild-type." evidence="8">
    <location>
        <position position="294"/>
    </location>
</feature>
<feature type="sequence variant" id="VAR_079004" description="In MDCCAID; no phosphatidylinositol-4,5-bisphosphate 5-phosphatase activity; shows normal localization indistinguishable from the wild-type; dbSNP:rs766046008." evidence="8">
    <original>Y</original>
    <variation>C</variation>
    <location>
        <position position="300"/>
    </location>
</feature>
<feature type="sequence variant" id="VAR_036497" description="In a breast cancer sample; somatic mutation." evidence="6">
    <original>S</original>
    <variation>F</variation>
    <location>
        <position position="315"/>
    </location>
</feature>
<feature type="sequence variant" id="VAR_079005" description="In MDCCAID; shows a diffuse perinuclear mislocalization; dbSNP:rs993849342." evidence="8">
    <original>I</original>
    <variation>T</variation>
    <location>
        <position position="363"/>
    </location>
</feature>
<feature type="mutagenesis site" description="No phosphatidylinositol-4,5-bisphosphate 5-phosphatase activity." evidence="8 9">
    <original>D</original>
    <variation>G</variation>
    <location>
        <position position="310"/>
    </location>
</feature>
<feature type="mutagenesis site" description="No effect on EGF-induced ruffle localization." evidence="4">
    <original>Y</original>
    <variation>A</variation>
    <variation>F</variation>
    <location>
        <position position="349"/>
    </location>
</feature>
<feature type="mutagenesis site" description="Significant decrease in EGF-induced ruffle localization." evidence="4">
    <original>D</original>
    <variation>A</variation>
    <location>
        <position position="361"/>
    </location>
</feature>
<feature type="mutagenesis site" description="Significant decrease in EGF-induced ruffle localization." evidence="4">
    <original>W</original>
    <variation>A</variation>
    <location>
        <position position="362"/>
    </location>
</feature>
<feature type="mutagenesis site" description="No effect on EGF-induced ruffle localization." evidence="4">
    <original>Y</original>
    <variation>A</variation>
    <variation>F</variation>
    <location>
        <position position="376"/>
    </location>
</feature>
<feature type="sequence conflict" description="In Ref. 5; AAB03214." evidence="12" ref="5">
    <original>T</original>
    <variation>A</variation>
    <location>
        <position position="120"/>
    </location>
</feature>
<feature type="sequence conflict" description="In Ref. 1; BAA92340/BAA92341/BAA92342 and 5; AAB03214." evidence="12" ref="1 5">
    <original>S</original>
    <variation>R</variation>
    <location>
        <position position="416"/>
    </location>
</feature>
<feature type="sequence conflict" description="In Ref. 1; BAA92340/BAA92341/BAA92342 and 5; AAB03214." evidence="12" ref="1 5">
    <original>S</original>
    <variation>R</variation>
    <location>
        <position position="426"/>
    </location>
</feature>